<feature type="chain" id="PRO_0000276216" description="Photosystem II reaction center protein L">
    <location>
        <begin position="1"/>
        <end position="38"/>
    </location>
</feature>
<feature type="transmembrane region" description="Helical" evidence="1">
    <location>
        <begin position="17"/>
        <end position="37"/>
    </location>
</feature>
<organism>
    <name type="scientific">Pelargonium hortorum</name>
    <name type="common">Common geranium</name>
    <name type="synonym">Pelargonium inquinans x Pelargonium zonale</name>
    <dbReference type="NCBI Taxonomy" id="4031"/>
    <lineage>
        <taxon>Eukaryota</taxon>
        <taxon>Viridiplantae</taxon>
        <taxon>Streptophyta</taxon>
        <taxon>Embryophyta</taxon>
        <taxon>Tracheophyta</taxon>
        <taxon>Spermatophyta</taxon>
        <taxon>Magnoliopsida</taxon>
        <taxon>eudicotyledons</taxon>
        <taxon>Gunneridae</taxon>
        <taxon>Pentapetalae</taxon>
        <taxon>rosids</taxon>
        <taxon>malvids</taxon>
        <taxon>Geraniales</taxon>
        <taxon>Geraniaceae</taxon>
        <taxon>Pelargonium</taxon>
    </lineage>
</organism>
<sequence>MTQSNPNEQNVELNRTSLYWGLLLIFVLAVLFSNYFFN</sequence>
<keyword id="KW-0150">Chloroplast</keyword>
<keyword id="KW-0472">Membrane</keyword>
<keyword id="KW-0602">Photosynthesis</keyword>
<keyword id="KW-0604">Photosystem II</keyword>
<keyword id="KW-0934">Plastid</keyword>
<keyword id="KW-0674">Reaction center</keyword>
<keyword id="KW-0793">Thylakoid</keyword>
<keyword id="KW-0812">Transmembrane</keyword>
<keyword id="KW-1133">Transmembrane helix</keyword>
<comment type="function">
    <text evidence="1">One of the components of the core complex of photosystem II (PSII). PSII is a light-driven water:plastoquinone oxidoreductase that uses light energy to abstract electrons from H(2)O, generating O(2) and a proton gradient subsequently used for ATP formation. It consists of a core antenna complex that captures photons, and an electron transfer chain that converts photonic excitation into a charge separation. This subunit is found at the monomer-monomer interface and is required for correct PSII assembly and/or dimerization.</text>
</comment>
<comment type="subunit">
    <text evidence="1">PSII is composed of 1 copy each of membrane proteins PsbA, PsbB, PsbC, PsbD, PsbE, PsbF, PsbH, PsbI, PsbJ, PsbK, PsbL, PsbM, PsbT, PsbX, PsbY, PsbZ, Psb30/Ycf12, at least 3 peripheral proteins of the oxygen-evolving complex and a large number of cofactors. It forms dimeric complexes.</text>
</comment>
<comment type="subcellular location">
    <subcellularLocation>
        <location evidence="1">Plastid</location>
        <location evidence="1">Chloroplast thylakoid membrane</location>
        <topology evidence="1">Single-pass membrane protein</topology>
    </subcellularLocation>
</comment>
<comment type="similarity">
    <text evidence="1">Belongs to the PsbL family.</text>
</comment>
<name>PSBL_PELHO</name>
<reference key="1">
    <citation type="journal article" date="2006" name="Mol. Biol. Evol.">
        <title>The complete chloroplast genome sequence of Pelargonium x hortorum: organization and evolution of the largest and most highly rearranged chloroplast genome of land plants.</title>
        <authorList>
            <person name="Chumley T.W."/>
            <person name="Palmer J.D."/>
            <person name="Mower J.P."/>
            <person name="Fourcade H.M."/>
            <person name="Calie P.J."/>
            <person name="Boore J.L."/>
            <person name="Jansen R.K."/>
        </authorList>
    </citation>
    <scope>NUCLEOTIDE SEQUENCE [LARGE SCALE GENOMIC DNA]</scope>
    <source>
        <strain>cv. Ringo White</strain>
    </source>
</reference>
<geneLocation type="chloroplast"/>
<protein>
    <recommendedName>
        <fullName evidence="1">Photosystem II reaction center protein L</fullName>
        <shortName evidence="1">PSII-L</shortName>
    </recommendedName>
</protein>
<evidence type="ECO:0000255" key="1">
    <source>
        <dbReference type="HAMAP-Rule" id="MF_01317"/>
    </source>
</evidence>
<proteinExistence type="inferred from homology"/>
<gene>
    <name evidence="1" type="primary">psbL</name>
</gene>
<accession>Q06FL1</accession>
<dbReference type="EMBL" id="DQ897681">
    <property type="protein sequence ID" value="ABI17361.1"/>
    <property type="molecule type" value="Genomic_DNA"/>
</dbReference>
<dbReference type="EMBL" id="DQ897681">
    <property type="protein sequence ID" value="ABI17277.1"/>
    <property type="molecule type" value="Genomic_DNA"/>
</dbReference>
<dbReference type="RefSeq" id="YP_784086.1">
    <property type="nucleotide sequence ID" value="NC_008454.1"/>
</dbReference>
<dbReference type="RefSeq" id="YP_784170.1">
    <property type="nucleotide sequence ID" value="NC_008454.1"/>
</dbReference>
<dbReference type="SMR" id="Q06FL1"/>
<dbReference type="GeneID" id="4362757"/>
<dbReference type="GeneID" id="4362942"/>
<dbReference type="GO" id="GO:0009535">
    <property type="term" value="C:chloroplast thylakoid membrane"/>
    <property type="evidence" value="ECO:0007669"/>
    <property type="project" value="UniProtKB-SubCell"/>
</dbReference>
<dbReference type="GO" id="GO:0009539">
    <property type="term" value="C:photosystem II reaction center"/>
    <property type="evidence" value="ECO:0007669"/>
    <property type="project" value="InterPro"/>
</dbReference>
<dbReference type="GO" id="GO:0015979">
    <property type="term" value="P:photosynthesis"/>
    <property type="evidence" value="ECO:0007669"/>
    <property type="project" value="UniProtKB-UniRule"/>
</dbReference>
<dbReference type="HAMAP" id="MF_01317">
    <property type="entry name" value="PSII_PsbL"/>
    <property type="match status" value="1"/>
</dbReference>
<dbReference type="InterPro" id="IPR003372">
    <property type="entry name" value="PSII_PsbL"/>
</dbReference>
<dbReference type="InterPro" id="IPR037266">
    <property type="entry name" value="PSII_PsbL_sf"/>
</dbReference>
<dbReference type="NCBIfam" id="NF001972">
    <property type="entry name" value="PRK00753.1"/>
    <property type="match status" value="1"/>
</dbReference>
<dbReference type="Pfam" id="PF02419">
    <property type="entry name" value="PsbL"/>
    <property type="match status" value="1"/>
</dbReference>
<dbReference type="SUPFAM" id="SSF161017">
    <property type="entry name" value="Photosystem II reaction center protein L, PsbL"/>
    <property type="match status" value="1"/>
</dbReference>